<keyword id="KW-1003">Cell membrane</keyword>
<keyword id="KW-0472">Membrane</keyword>
<keyword id="KW-1185">Reference proteome</keyword>
<keyword id="KW-0812">Transmembrane</keyword>
<keyword id="KW-1133">Transmembrane helix</keyword>
<keyword id="KW-0813">Transport</keyword>
<feature type="chain" id="PRO_0000421001" description="Probable anion ABC transporter permease protein HVO_1887">
    <location>
        <begin position="1"/>
        <end position="232"/>
    </location>
</feature>
<feature type="transmembrane region" description="Helical" evidence="2">
    <location>
        <begin position="23"/>
        <end position="43"/>
    </location>
</feature>
<feature type="transmembrane region" description="Helical" evidence="2">
    <location>
        <begin position="55"/>
        <end position="75"/>
    </location>
</feature>
<feature type="transmembrane region" description="Helical" evidence="2">
    <location>
        <begin position="93"/>
        <end position="113"/>
    </location>
</feature>
<feature type="transmembrane region" description="Helical" evidence="2">
    <location>
        <begin position="146"/>
        <end position="166"/>
    </location>
</feature>
<feature type="transmembrane region" description="Helical" evidence="2">
    <location>
        <begin position="198"/>
        <end position="218"/>
    </location>
</feature>
<feature type="domain" description="ABC transmembrane type-1" evidence="2">
    <location>
        <begin position="16"/>
        <end position="217"/>
    </location>
</feature>
<feature type="sequence conflict" description="In Ref. 1; CAB42541." evidence="4" ref="1">
    <original>L</original>
    <variation>F</variation>
    <location>
        <position position="165"/>
    </location>
</feature>
<sequence length="232" mass="23860">MFALGDLNLTYLVSITAVSLYVSTAAVALSAALGLPISLAVGFRDFYGKSVVTSVISTGMGFPSVVVGLVVLLVLSRSGPLGTFELLFTPEAMILSQTILALPVLVSVSLSAVQSVPQDLRDAAFAAGGTSTDIALLVVREARYGIVTALLAAYGRAISEVGSVLIVGGNIVFSDSTSFTRTLTTAITVEARKGNIETGIALGAILLALVLGVNALGARFRDRTPGRNGRGR</sequence>
<name>ANTRP_HALVD</name>
<gene>
    <name type="ordered locus">HVO_1887</name>
</gene>
<protein>
    <recommendedName>
        <fullName>Probable anion ABC transporter permease protein HVO_1887</fullName>
    </recommendedName>
</protein>
<organism>
    <name type="scientific">Haloferax volcanii (strain ATCC 29605 / DSM 3757 / JCM 8879 / NBRC 14742 / NCIMB 2012 / VKM B-1768 / DS2)</name>
    <name type="common">Halobacterium volcanii</name>
    <dbReference type="NCBI Taxonomy" id="309800"/>
    <lineage>
        <taxon>Archaea</taxon>
        <taxon>Methanobacteriati</taxon>
        <taxon>Methanobacteriota</taxon>
        <taxon>Stenosarchaea group</taxon>
        <taxon>Halobacteria</taxon>
        <taxon>Halobacteriales</taxon>
        <taxon>Haloferacaceae</taxon>
        <taxon>Haloferax</taxon>
    </lineage>
</organism>
<comment type="function">
    <text evidence="1 3 4">Part of an ABC transporter complex involved in anions import (Probable). Responsible for the translocation of the substrate across the membrane (By similarity).</text>
</comment>
<comment type="subunit">
    <text evidence="4">The complex is composed of two ATP-binding proteins (HVO_1886), two transmembrane proteins (HVO_1887) and a solute-binding protein (HVO_1888).</text>
</comment>
<comment type="subcellular location">
    <subcellularLocation>
        <location evidence="4">Cell membrane</location>
        <topology evidence="2">Multi-pass membrane protein</topology>
    </subcellularLocation>
</comment>
<comment type="disruption phenotype">
    <text evidence="3">Mutation within HVO_1886 or HVO_1887 causes nitrate respiration deficiency.</text>
</comment>
<comment type="similarity">
    <text evidence="4">Belongs to the binding-protein-dependent transport system permease family.</text>
</comment>
<proteinExistence type="inferred from homology"/>
<accession>D4GSY8</accession>
<accession>Q9Y8J6</accession>
<evidence type="ECO:0000250" key="1"/>
<evidence type="ECO:0000255" key="2">
    <source>
        <dbReference type="PROSITE-ProRule" id="PRU00441"/>
    </source>
</evidence>
<evidence type="ECO:0000269" key="3">
    <source>
    </source>
</evidence>
<evidence type="ECO:0000305" key="4"/>
<reference key="1">
    <citation type="journal article" date="1999" name="Genetics">
        <title>Genetic identification of three ABC transporters as essential elements for nitrate respiration in Haloferax volcanii.</title>
        <authorList>
            <person name="Wanner C."/>
            <person name="Soppa J."/>
        </authorList>
    </citation>
    <scope>NUCLEOTIDE SEQUENCE [GENOMIC DNA]</scope>
    <scope>FUNCTION</scope>
    <scope>DISRUPTION PHENOTYPE</scope>
    <source>
        <strain>DS2 / WR 340</strain>
    </source>
</reference>
<reference key="2">
    <citation type="journal article" date="2010" name="PLoS ONE">
        <title>The complete genome sequence of Haloferax volcanii DS2, a model archaeon.</title>
        <authorList>
            <person name="Hartman A.L."/>
            <person name="Norais C."/>
            <person name="Badger J.H."/>
            <person name="Delmas S."/>
            <person name="Haldenby S."/>
            <person name="Madupu R."/>
            <person name="Robinson J."/>
            <person name="Khouri H."/>
            <person name="Ren Q."/>
            <person name="Lowe T.M."/>
            <person name="Maupin-Furlow J."/>
            <person name="Pohlschroder M."/>
            <person name="Daniels C."/>
            <person name="Pfeiffer F."/>
            <person name="Allers T."/>
            <person name="Eisen J.A."/>
        </authorList>
    </citation>
    <scope>NUCLEOTIDE SEQUENCE [LARGE SCALE GENOMIC DNA]</scope>
    <source>
        <strain>ATCC 29605 / DSM 3757 / JCM 8879 / NBRC 14742 / NCIMB 2012 / VKM B-1768 / DS2</strain>
    </source>
</reference>
<dbReference type="EMBL" id="AJ238877">
    <property type="protein sequence ID" value="CAB42541.1"/>
    <property type="molecule type" value="Genomic_DNA"/>
</dbReference>
<dbReference type="EMBL" id="CP001956">
    <property type="protein sequence ID" value="ADE04198.1"/>
    <property type="molecule type" value="Genomic_DNA"/>
</dbReference>
<dbReference type="RefSeq" id="WP_004041768.1">
    <property type="nucleotide sequence ID" value="NC_013967.1"/>
</dbReference>
<dbReference type="SMR" id="D4GSY8"/>
<dbReference type="STRING" id="309800.HVO_1887"/>
<dbReference type="PaxDb" id="309800-C498_04700"/>
<dbReference type="EnsemblBacteria" id="ADE04198">
    <property type="protein sequence ID" value="ADE04198"/>
    <property type="gene ID" value="HVO_1887"/>
</dbReference>
<dbReference type="GeneID" id="8925034"/>
<dbReference type="KEGG" id="hvo:HVO_1887"/>
<dbReference type="eggNOG" id="arCOG00166">
    <property type="taxonomic scope" value="Archaea"/>
</dbReference>
<dbReference type="HOGENOM" id="CLU_016047_14_2_2"/>
<dbReference type="OrthoDB" id="94632at2157"/>
<dbReference type="Proteomes" id="UP000008243">
    <property type="component" value="Chromosome"/>
</dbReference>
<dbReference type="GO" id="GO:0005886">
    <property type="term" value="C:plasma membrane"/>
    <property type="evidence" value="ECO:0007669"/>
    <property type="project" value="UniProtKB-SubCell"/>
</dbReference>
<dbReference type="GO" id="GO:0055085">
    <property type="term" value="P:transmembrane transport"/>
    <property type="evidence" value="ECO:0007669"/>
    <property type="project" value="InterPro"/>
</dbReference>
<dbReference type="CDD" id="cd06261">
    <property type="entry name" value="TM_PBP2"/>
    <property type="match status" value="1"/>
</dbReference>
<dbReference type="Gene3D" id="1.10.3720.10">
    <property type="entry name" value="MetI-like"/>
    <property type="match status" value="1"/>
</dbReference>
<dbReference type="InterPro" id="IPR049783">
    <property type="entry name" value="ABC_perm_TupB-like"/>
</dbReference>
<dbReference type="InterPro" id="IPR000515">
    <property type="entry name" value="MetI-like"/>
</dbReference>
<dbReference type="InterPro" id="IPR035906">
    <property type="entry name" value="MetI-like_sf"/>
</dbReference>
<dbReference type="NCBIfam" id="NF038017">
    <property type="entry name" value="ABC_perm1"/>
    <property type="match status" value="1"/>
</dbReference>
<dbReference type="PANTHER" id="PTHR43632">
    <property type="entry name" value="PERMEASE COMPONENT OF TUNGSTATE ABC TRANSPORTER"/>
    <property type="match status" value="1"/>
</dbReference>
<dbReference type="PANTHER" id="PTHR43632:SF1">
    <property type="entry name" value="PERMEASE COMPONENT OF TUNGSTATE ABC TRANSPORTER"/>
    <property type="match status" value="1"/>
</dbReference>
<dbReference type="Pfam" id="PF00528">
    <property type="entry name" value="BPD_transp_1"/>
    <property type="match status" value="1"/>
</dbReference>
<dbReference type="SUPFAM" id="SSF161098">
    <property type="entry name" value="MetI-like"/>
    <property type="match status" value="1"/>
</dbReference>
<dbReference type="PROSITE" id="PS50928">
    <property type="entry name" value="ABC_TM1"/>
    <property type="match status" value="1"/>
</dbReference>